<name>3SE_DENAN</name>
<proteinExistence type="evidence at protein level"/>
<feature type="chain" id="PRO_0000093654" description="Dendrotoxin A" evidence="3">
    <location>
        <begin position="1"/>
        <end position="30" status="greater than"/>
    </location>
</feature>
<feature type="disulfide bond" evidence="2">
    <location>
        <begin position="3"/>
        <end position="22"/>
    </location>
</feature>
<feature type="non-terminal residue">
    <location>
        <position position="30"/>
    </location>
</feature>
<sequence>TMCYSHTTTSRAILTNCGENSCYRKSRVHP</sequence>
<protein>
    <recommendedName>
        <fullName>Dendrotoxin A</fullName>
        <shortName>DTX-A</shortName>
    </recommendedName>
    <alternativeName>
        <fullName>Fasciculin</fullName>
    </alternativeName>
</protein>
<dbReference type="SMR" id="Q9PS08"/>
<dbReference type="GO" id="GO:0005576">
    <property type="term" value="C:extracellular region"/>
    <property type="evidence" value="ECO:0007669"/>
    <property type="project" value="UniProtKB-SubCell"/>
</dbReference>
<dbReference type="GO" id="GO:0015459">
    <property type="term" value="F:potassium channel regulator activity"/>
    <property type="evidence" value="ECO:0007669"/>
    <property type="project" value="UniProtKB-KW"/>
</dbReference>
<dbReference type="GO" id="GO:0090729">
    <property type="term" value="F:toxin activity"/>
    <property type="evidence" value="ECO:0007669"/>
    <property type="project" value="UniProtKB-KW"/>
</dbReference>
<dbReference type="Gene3D" id="2.10.60.10">
    <property type="entry name" value="CD59"/>
    <property type="match status" value="1"/>
</dbReference>
<dbReference type="InterPro" id="IPR045860">
    <property type="entry name" value="Snake_toxin-like_sf"/>
</dbReference>
<keyword id="KW-0903">Direct protein sequencing</keyword>
<keyword id="KW-1015">Disulfide bond</keyword>
<keyword id="KW-0872">Ion channel impairing toxin</keyword>
<keyword id="KW-0528">Neurotoxin</keyword>
<keyword id="KW-0632">Potassium channel impairing toxin</keyword>
<keyword id="KW-0964">Secreted</keyword>
<keyword id="KW-0800">Toxin</keyword>
<comment type="function">
    <text evidence="1 3">Inhibits acetylcholinesterase (By similarity). Has been described to inhibit both the slowly and the rapidly inactivating phases of potassium efflux (PubMed:1304870).</text>
</comment>
<comment type="subcellular location">
    <subcellularLocation>
        <location evidence="3">Secreted</location>
    </subcellularLocation>
</comment>
<comment type="tissue specificity">
    <text evidence="4">Expressed by the venom gland.</text>
</comment>
<comment type="PTM">
    <text evidence="2">Contains 4 disulfide bonds.</text>
</comment>
<comment type="similarity">
    <text evidence="4">Belongs to the three-finger toxin family. Short-chain subfamily. Acn-esterase inhibitor sub-subfamily.</text>
</comment>
<evidence type="ECO:0000250" key="1">
    <source>
        <dbReference type="UniProtKB" id="P0C1Z0"/>
    </source>
</evidence>
<evidence type="ECO:0000250" key="2">
    <source>
        <dbReference type="UniProtKB" id="P60301"/>
    </source>
</evidence>
<evidence type="ECO:0000269" key="3">
    <source>
    </source>
</evidence>
<evidence type="ECO:0000305" key="4"/>
<reference key="1">
    <citation type="journal article" date="1992" name="Neurochem. Int.">
        <title>Purification and partial characterization of K+ channel blockers from the venom of Dendroaspis angusticeps.</title>
        <authorList>
            <person name="Chaki S."/>
            <person name="Muramatsu M."/>
            <person name="Ushiyama Y."/>
            <person name="Otomo S."/>
        </authorList>
    </citation>
    <scope>PROTEIN SEQUENCE</scope>
    <scope>SUBCELLULAR LOCATION</scope>
    <source>
        <tissue>Venom</tissue>
    </source>
</reference>
<organism>
    <name type="scientific">Dendroaspis angusticeps</name>
    <name type="common">Eastern green mamba</name>
    <name type="synonym">Naja angusticeps</name>
    <dbReference type="NCBI Taxonomy" id="8618"/>
    <lineage>
        <taxon>Eukaryota</taxon>
        <taxon>Metazoa</taxon>
        <taxon>Chordata</taxon>
        <taxon>Craniata</taxon>
        <taxon>Vertebrata</taxon>
        <taxon>Euteleostomi</taxon>
        <taxon>Lepidosauria</taxon>
        <taxon>Squamata</taxon>
        <taxon>Bifurcata</taxon>
        <taxon>Unidentata</taxon>
        <taxon>Episquamata</taxon>
        <taxon>Toxicofera</taxon>
        <taxon>Serpentes</taxon>
        <taxon>Colubroidea</taxon>
        <taxon>Elapidae</taxon>
        <taxon>Elapinae</taxon>
        <taxon>Dendroaspis</taxon>
    </lineage>
</organism>
<accession>Q9PS08</accession>